<accession>A1BFP7</accession>
<protein>
    <recommendedName>
        <fullName evidence="1">Chaperone protein HtpG</fullName>
    </recommendedName>
    <alternativeName>
        <fullName evidence="1">Heat shock protein HtpG</fullName>
    </alternativeName>
    <alternativeName>
        <fullName evidence="1">High temperature protein G</fullName>
    </alternativeName>
</protein>
<feature type="chain" id="PRO_1000014909" description="Chaperone protein HtpG">
    <location>
        <begin position="1"/>
        <end position="626"/>
    </location>
</feature>
<feature type="region of interest" description="A; substrate-binding" evidence="1">
    <location>
        <begin position="1"/>
        <end position="332"/>
    </location>
</feature>
<feature type="region of interest" description="B" evidence="1">
    <location>
        <begin position="333"/>
        <end position="546"/>
    </location>
</feature>
<feature type="region of interest" description="C" evidence="1">
    <location>
        <begin position="547"/>
        <end position="626"/>
    </location>
</feature>
<reference key="1">
    <citation type="submission" date="2006-12" db="EMBL/GenBank/DDBJ databases">
        <title>Complete sequence of Chlorobium phaeobacteroides DSM 266.</title>
        <authorList>
            <consortium name="US DOE Joint Genome Institute"/>
            <person name="Copeland A."/>
            <person name="Lucas S."/>
            <person name="Lapidus A."/>
            <person name="Barry K."/>
            <person name="Detter J.C."/>
            <person name="Glavina del Rio T."/>
            <person name="Hammon N."/>
            <person name="Israni S."/>
            <person name="Pitluck S."/>
            <person name="Goltsman E."/>
            <person name="Schmutz J."/>
            <person name="Larimer F."/>
            <person name="Land M."/>
            <person name="Hauser L."/>
            <person name="Mikhailova N."/>
            <person name="Li T."/>
            <person name="Overmann J."/>
            <person name="Bryant D.A."/>
            <person name="Richardson P."/>
        </authorList>
    </citation>
    <scope>NUCLEOTIDE SEQUENCE [LARGE SCALE GENOMIC DNA]</scope>
    <source>
        <strain>DSM 266 / SMG 266 / 2430</strain>
    </source>
</reference>
<evidence type="ECO:0000255" key="1">
    <source>
        <dbReference type="HAMAP-Rule" id="MF_00505"/>
    </source>
</evidence>
<comment type="function">
    <text evidence="1">Molecular chaperone. Has ATPase activity.</text>
</comment>
<comment type="subunit">
    <text evidence="1">Homodimer.</text>
</comment>
<comment type="subcellular location">
    <subcellularLocation>
        <location evidence="1">Cytoplasm</location>
    </subcellularLocation>
</comment>
<comment type="similarity">
    <text evidence="1">Belongs to the heat shock protein 90 family.</text>
</comment>
<sequence>MTNNDTPGMREYEYKAEMKQLLELIVHSLYTHPEIFLRELISNASDALSKVRFNALTDESIINSDAGLAIRITLDPEAHTIVIEDNGTGMTEEELILNLGTVARSGTLGFLQALKEQQKELDGNLIGQFGVGFYSVFMVTDEVTVETRSSGADSAGYRWRSGAAGTFTIERIEKEQRGTKISFALKDEFKEFSEAYRIEQIIRKYSNFVDFPIFLGDNQINTISALWQRSKNEVSDEERNEFYKFLSNDFNPPLDSLHLSVEGKVCFKALLFLPEEAPPELMYRQGDLESRGPQLYVKKVLIQQECRDLLPEYLRFVAGVVDTEDLPLNVSREVVQSSKVMANIRQILTGKILSWFESMATDQPEKFRKFYKAFGPFLKIGLNTDFTHRDRIIGLMRFESTKTAEGEYVTFKEYVERMEAGQNEIYYHSGSNRIQLLAHPNLEYFQHKGIEVLLLSDPVDVFVIPSIHEYDKKPLKSIEKADIDFTRTGDDKTEPPLPETLSQPLLGLFRQTIGDVIEDVVESHRLVSSPVTLVSGKDSLDSSMEKMMKMMHAEMPAAKKILEVNTSHPIIKNLSGMIMANEHNPLIRTVIQQLYDGALLHEGNLDATTGFLQRMNELIEAATMSR</sequence>
<gene>
    <name evidence="1" type="primary">htpG</name>
    <name type="ordered locus">Cpha266_1188</name>
</gene>
<organism>
    <name type="scientific">Chlorobium phaeobacteroides (strain DSM 266 / SMG 266 / 2430)</name>
    <dbReference type="NCBI Taxonomy" id="290317"/>
    <lineage>
        <taxon>Bacteria</taxon>
        <taxon>Pseudomonadati</taxon>
        <taxon>Chlorobiota</taxon>
        <taxon>Chlorobiia</taxon>
        <taxon>Chlorobiales</taxon>
        <taxon>Chlorobiaceae</taxon>
        <taxon>Chlorobium/Pelodictyon group</taxon>
        <taxon>Chlorobium</taxon>
    </lineage>
</organism>
<keyword id="KW-0067">ATP-binding</keyword>
<keyword id="KW-0143">Chaperone</keyword>
<keyword id="KW-0963">Cytoplasm</keyword>
<keyword id="KW-0547">Nucleotide-binding</keyword>
<keyword id="KW-1185">Reference proteome</keyword>
<keyword id="KW-0346">Stress response</keyword>
<proteinExistence type="inferred from homology"/>
<dbReference type="EMBL" id="CP000492">
    <property type="protein sequence ID" value="ABL65224.1"/>
    <property type="molecule type" value="Genomic_DNA"/>
</dbReference>
<dbReference type="RefSeq" id="WP_011745048.1">
    <property type="nucleotide sequence ID" value="NC_008639.1"/>
</dbReference>
<dbReference type="SMR" id="A1BFP7"/>
<dbReference type="STRING" id="290317.Cpha266_1188"/>
<dbReference type="KEGG" id="cph:Cpha266_1188"/>
<dbReference type="eggNOG" id="COG0326">
    <property type="taxonomic scope" value="Bacteria"/>
</dbReference>
<dbReference type="HOGENOM" id="CLU_006684_3_0_10"/>
<dbReference type="OrthoDB" id="9802640at2"/>
<dbReference type="Proteomes" id="UP000008701">
    <property type="component" value="Chromosome"/>
</dbReference>
<dbReference type="GO" id="GO:0005737">
    <property type="term" value="C:cytoplasm"/>
    <property type="evidence" value="ECO:0007669"/>
    <property type="project" value="UniProtKB-SubCell"/>
</dbReference>
<dbReference type="GO" id="GO:0005524">
    <property type="term" value="F:ATP binding"/>
    <property type="evidence" value="ECO:0007669"/>
    <property type="project" value="UniProtKB-UniRule"/>
</dbReference>
<dbReference type="GO" id="GO:0016887">
    <property type="term" value="F:ATP hydrolysis activity"/>
    <property type="evidence" value="ECO:0007669"/>
    <property type="project" value="InterPro"/>
</dbReference>
<dbReference type="GO" id="GO:0140662">
    <property type="term" value="F:ATP-dependent protein folding chaperone"/>
    <property type="evidence" value="ECO:0007669"/>
    <property type="project" value="InterPro"/>
</dbReference>
<dbReference type="GO" id="GO:0051082">
    <property type="term" value="F:unfolded protein binding"/>
    <property type="evidence" value="ECO:0007669"/>
    <property type="project" value="UniProtKB-UniRule"/>
</dbReference>
<dbReference type="CDD" id="cd16927">
    <property type="entry name" value="HATPase_Hsp90-like"/>
    <property type="match status" value="1"/>
</dbReference>
<dbReference type="FunFam" id="3.30.565.10:FF:000009">
    <property type="entry name" value="Molecular chaperone HtpG"/>
    <property type="match status" value="1"/>
</dbReference>
<dbReference type="Gene3D" id="3.30.230.80">
    <property type="match status" value="1"/>
</dbReference>
<dbReference type="Gene3D" id="3.40.50.11260">
    <property type="match status" value="1"/>
</dbReference>
<dbReference type="Gene3D" id="1.20.120.790">
    <property type="entry name" value="Heat shock protein 90, C-terminal domain"/>
    <property type="match status" value="1"/>
</dbReference>
<dbReference type="Gene3D" id="3.30.565.10">
    <property type="entry name" value="Histidine kinase-like ATPase, C-terminal domain"/>
    <property type="match status" value="1"/>
</dbReference>
<dbReference type="HAMAP" id="MF_00505">
    <property type="entry name" value="HSP90"/>
    <property type="match status" value="1"/>
</dbReference>
<dbReference type="InterPro" id="IPR036890">
    <property type="entry name" value="HATPase_C_sf"/>
</dbReference>
<dbReference type="InterPro" id="IPR037196">
    <property type="entry name" value="HSP90_C"/>
</dbReference>
<dbReference type="InterPro" id="IPR001404">
    <property type="entry name" value="Hsp90_fam"/>
</dbReference>
<dbReference type="InterPro" id="IPR020575">
    <property type="entry name" value="Hsp90_N"/>
</dbReference>
<dbReference type="InterPro" id="IPR020568">
    <property type="entry name" value="Ribosomal_Su5_D2-typ_SF"/>
</dbReference>
<dbReference type="NCBIfam" id="NF003555">
    <property type="entry name" value="PRK05218.1"/>
    <property type="match status" value="1"/>
</dbReference>
<dbReference type="PANTHER" id="PTHR11528">
    <property type="entry name" value="HEAT SHOCK PROTEIN 90 FAMILY MEMBER"/>
    <property type="match status" value="1"/>
</dbReference>
<dbReference type="Pfam" id="PF13589">
    <property type="entry name" value="HATPase_c_3"/>
    <property type="match status" value="1"/>
</dbReference>
<dbReference type="Pfam" id="PF00183">
    <property type="entry name" value="HSP90"/>
    <property type="match status" value="1"/>
</dbReference>
<dbReference type="PIRSF" id="PIRSF002583">
    <property type="entry name" value="Hsp90"/>
    <property type="match status" value="1"/>
</dbReference>
<dbReference type="PRINTS" id="PR00775">
    <property type="entry name" value="HEATSHOCK90"/>
</dbReference>
<dbReference type="SUPFAM" id="SSF55874">
    <property type="entry name" value="ATPase domain of HSP90 chaperone/DNA topoisomerase II/histidine kinase"/>
    <property type="match status" value="1"/>
</dbReference>
<dbReference type="SUPFAM" id="SSF110942">
    <property type="entry name" value="HSP90 C-terminal domain"/>
    <property type="match status" value="1"/>
</dbReference>
<dbReference type="SUPFAM" id="SSF54211">
    <property type="entry name" value="Ribosomal protein S5 domain 2-like"/>
    <property type="match status" value="1"/>
</dbReference>
<name>HTPG_CHLPD</name>